<keyword id="KW-1185">Reference proteome</keyword>
<gene>
    <name type="ordered locus">HEAR0176</name>
</gene>
<name>Y176_HERAR</name>
<feature type="chain" id="PRO_0000336189" description="UPF0102 protein HEAR0176">
    <location>
        <begin position="1"/>
        <end position="124"/>
    </location>
</feature>
<protein>
    <recommendedName>
        <fullName evidence="1">UPF0102 protein HEAR0176</fullName>
    </recommendedName>
</protein>
<sequence>MRLPTFLKRPRTARQIVGQMGEDEALRYLQKQGLALIERNFRCKGGEIDLVMQDGDTLVFVEVRKRADKNHGGAAASVTPEKQKRLIVAAHIFLQRYKMPPACRFDVIAIDATEMNWLKNAIES</sequence>
<evidence type="ECO:0000255" key="1">
    <source>
        <dbReference type="HAMAP-Rule" id="MF_00048"/>
    </source>
</evidence>
<evidence type="ECO:0000305" key="2"/>
<proteinExistence type="inferred from homology"/>
<accession>A4G1M4</accession>
<reference key="1">
    <citation type="journal article" date="2007" name="PLoS Genet.">
        <title>A tale of two oxidation states: bacterial colonization of arsenic-rich environments.</title>
        <authorList>
            <person name="Muller D."/>
            <person name="Medigue C."/>
            <person name="Koechler S."/>
            <person name="Barbe V."/>
            <person name="Barakat M."/>
            <person name="Talla E."/>
            <person name="Bonnefoy V."/>
            <person name="Krin E."/>
            <person name="Arsene-Ploetze F."/>
            <person name="Carapito C."/>
            <person name="Chandler M."/>
            <person name="Cournoyer B."/>
            <person name="Cruveiller S."/>
            <person name="Dossat C."/>
            <person name="Duval S."/>
            <person name="Heymann M."/>
            <person name="Leize E."/>
            <person name="Lieutaud A."/>
            <person name="Lievremont D."/>
            <person name="Makita Y."/>
            <person name="Mangenot S."/>
            <person name="Nitschke W."/>
            <person name="Ortet P."/>
            <person name="Perdrial N."/>
            <person name="Schoepp B."/>
            <person name="Siguier P."/>
            <person name="Simeonova D.D."/>
            <person name="Rouy Z."/>
            <person name="Segurens B."/>
            <person name="Turlin E."/>
            <person name="Vallenet D."/>
            <person name="van Dorsselaer A."/>
            <person name="Weiss S."/>
            <person name="Weissenbach J."/>
            <person name="Lett M.-C."/>
            <person name="Danchin A."/>
            <person name="Bertin P.N."/>
        </authorList>
    </citation>
    <scope>NUCLEOTIDE SEQUENCE [LARGE SCALE GENOMIC DNA]</scope>
    <source>
        <strain>ULPAs1</strain>
    </source>
</reference>
<organism>
    <name type="scientific">Herminiimonas arsenicoxydans</name>
    <dbReference type="NCBI Taxonomy" id="204773"/>
    <lineage>
        <taxon>Bacteria</taxon>
        <taxon>Pseudomonadati</taxon>
        <taxon>Pseudomonadota</taxon>
        <taxon>Betaproteobacteria</taxon>
        <taxon>Burkholderiales</taxon>
        <taxon>Oxalobacteraceae</taxon>
        <taxon>Herminiimonas</taxon>
    </lineage>
</organism>
<dbReference type="EMBL" id="CU207211">
    <property type="protein sequence ID" value="CAL60411.2"/>
    <property type="status" value="ALT_INIT"/>
    <property type="molecule type" value="Genomic_DNA"/>
</dbReference>
<dbReference type="SMR" id="A4G1M4"/>
<dbReference type="STRING" id="204773.HEAR0176"/>
<dbReference type="KEGG" id="har:HEAR0176"/>
<dbReference type="eggNOG" id="COG0792">
    <property type="taxonomic scope" value="Bacteria"/>
</dbReference>
<dbReference type="HOGENOM" id="CLU_115353_1_0_4"/>
<dbReference type="OrthoDB" id="9794876at2"/>
<dbReference type="Proteomes" id="UP000006697">
    <property type="component" value="Chromosome"/>
</dbReference>
<dbReference type="GO" id="GO:0003676">
    <property type="term" value="F:nucleic acid binding"/>
    <property type="evidence" value="ECO:0007669"/>
    <property type="project" value="InterPro"/>
</dbReference>
<dbReference type="CDD" id="cd20736">
    <property type="entry name" value="PoNe_Nuclease"/>
    <property type="match status" value="1"/>
</dbReference>
<dbReference type="Gene3D" id="3.40.1350.10">
    <property type="match status" value="1"/>
</dbReference>
<dbReference type="HAMAP" id="MF_00048">
    <property type="entry name" value="UPF0102"/>
    <property type="match status" value="1"/>
</dbReference>
<dbReference type="InterPro" id="IPR011335">
    <property type="entry name" value="Restrct_endonuc-II-like"/>
</dbReference>
<dbReference type="InterPro" id="IPR011856">
    <property type="entry name" value="tRNA_endonuc-like_dom_sf"/>
</dbReference>
<dbReference type="InterPro" id="IPR003509">
    <property type="entry name" value="UPF0102_YraN-like"/>
</dbReference>
<dbReference type="NCBIfam" id="NF009150">
    <property type="entry name" value="PRK12497.1-3"/>
    <property type="match status" value="1"/>
</dbReference>
<dbReference type="NCBIfam" id="NF009154">
    <property type="entry name" value="PRK12497.3-3"/>
    <property type="match status" value="1"/>
</dbReference>
<dbReference type="NCBIfam" id="TIGR00252">
    <property type="entry name" value="YraN family protein"/>
    <property type="match status" value="1"/>
</dbReference>
<dbReference type="PANTHER" id="PTHR34039">
    <property type="entry name" value="UPF0102 PROTEIN YRAN"/>
    <property type="match status" value="1"/>
</dbReference>
<dbReference type="PANTHER" id="PTHR34039:SF1">
    <property type="entry name" value="UPF0102 PROTEIN YRAN"/>
    <property type="match status" value="1"/>
</dbReference>
<dbReference type="Pfam" id="PF02021">
    <property type="entry name" value="UPF0102"/>
    <property type="match status" value="1"/>
</dbReference>
<dbReference type="SUPFAM" id="SSF52980">
    <property type="entry name" value="Restriction endonuclease-like"/>
    <property type="match status" value="1"/>
</dbReference>
<comment type="similarity">
    <text evidence="1">Belongs to the UPF0102 family.</text>
</comment>
<comment type="sequence caution" evidence="2">
    <conflict type="erroneous initiation">
        <sequence resource="EMBL-CDS" id="CAL60411"/>
    </conflict>
</comment>